<feature type="chain" id="PRO_0000367701" description="Glutamate--tRNA ligase">
    <location>
        <begin position="1"/>
        <end position="468"/>
    </location>
</feature>
<feature type="short sequence motif" description="'HIGH' region" evidence="1">
    <location>
        <begin position="14"/>
        <end position="24"/>
    </location>
</feature>
<feature type="short sequence motif" description="'KMSKS' region" evidence="1">
    <location>
        <begin position="246"/>
        <end position="250"/>
    </location>
</feature>
<feature type="binding site" evidence="1">
    <location>
        <position position="249"/>
    </location>
    <ligand>
        <name>ATP</name>
        <dbReference type="ChEBI" id="CHEBI:30616"/>
    </ligand>
</feature>
<reference key="1">
    <citation type="submission" date="2008-03" db="EMBL/GenBank/DDBJ databases">
        <title>Complete sequence of Leptothrix cholodnii SP-6.</title>
        <authorList>
            <consortium name="US DOE Joint Genome Institute"/>
            <person name="Copeland A."/>
            <person name="Lucas S."/>
            <person name="Lapidus A."/>
            <person name="Glavina del Rio T."/>
            <person name="Dalin E."/>
            <person name="Tice H."/>
            <person name="Bruce D."/>
            <person name="Goodwin L."/>
            <person name="Pitluck S."/>
            <person name="Chertkov O."/>
            <person name="Brettin T."/>
            <person name="Detter J.C."/>
            <person name="Han C."/>
            <person name="Kuske C.R."/>
            <person name="Schmutz J."/>
            <person name="Larimer F."/>
            <person name="Land M."/>
            <person name="Hauser L."/>
            <person name="Kyrpides N."/>
            <person name="Lykidis A."/>
            <person name="Emerson D."/>
            <person name="Richardson P."/>
        </authorList>
    </citation>
    <scope>NUCLEOTIDE SEQUENCE [LARGE SCALE GENOMIC DNA]</scope>
    <source>
        <strain>ATCC 51168 / LMG 8142 / SP-6</strain>
    </source>
</reference>
<evidence type="ECO:0000255" key="1">
    <source>
        <dbReference type="HAMAP-Rule" id="MF_00022"/>
    </source>
</evidence>
<accession>B1XY56</accession>
<protein>
    <recommendedName>
        <fullName evidence="1">Glutamate--tRNA ligase</fullName>
        <ecNumber evidence="1">6.1.1.17</ecNumber>
    </recommendedName>
    <alternativeName>
        <fullName evidence="1">Glutamyl-tRNA synthetase</fullName>
        <shortName evidence="1">GluRS</shortName>
    </alternativeName>
</protein>
<keyword id="KW-0030">Aminoacyl-tRNA synthetase</keyword>
<keyword id="KW-0067">ATP-binding</keyword>
<keyword id="KW-0963">Cytoplasm</keyword>
<keyword id="KW-0436">Ligase</keyword>
<keyword id="KW-0547">Nucleotide-binding</keyword>
<keyword id="KW-0648">Protein biosynthesis</keyword>
<keyword id="KW-1185">Reference proteome</keyword>
<gene>
    <name evidence="1" type="primary">gltX</name>
    <name type="ordered locus">Lcho_1690</name>
</gene>
<comment type="function">
    <text evidence="1">Catalyzes the attachment of glutamate to tRNA(Glu) in a two-step reaction: glutamate is first activated by ATP to form Glu-AMP and then transferred to the acceptor end of tRNA(Glu).</text>
</comment>
<comment type="catalytic activity">
    <reaction evidence="1">
        <text>tRNA(Glu) + L-glutamate + ATP = L-glutamyl-tRNA(Glu) + AMP + diphosphate</text>
        <dbReference type="Rhea" id="RHEA:23540"/>
        <dbReference type="Rhea" id="RHEA-COMP:9663"/>
        <dbReference type="Rhea" id="RHEA-COMP:9680"/>
        <dbReference type="ChEBI" id="CHEBI:29985"/>
        <dbReference type="ChEBI" id="CHEBI:30616"/>
        <dbReference type="ChEBI" id="CHEBI:33019"/>
        <dbReference type="ChEBI" id="CHEBI:78442"/>
        <dbReference type="ChEBI" id="CHEBI:78520"/>
        <dbReference type="ChEBI" id="CHEBI:456215"/>
        <dbReference type="EC" id="6.1.1.17"/>
    </reaction>
</comment>
<comment type="subunit">
    <text evidence="1">Monomer.</text>
</comment>
<comment type="subcellular location">
    <subcellularLocation>
        <location evidence="1">Cytoplasm</location>
    </subcellularLocation>
</comment>
<comment type="similarity">
    <text evidence="1">Belongs to the class-I aminoacyl-tRNA synthetase family. Glutamate--tRNA ligase type 1 subfamily.</text>
</comment>
<name>SYE_LEPCP</name>
<dbReference type="EC" id="6.1.1.17" evidence="1"/>
<dbReference type="EMBL" id="CP001013">
    <property type="protein sequence ID" value="ACB33957.1"/>
    <property type="molecule type" value="Genomic_DNA"/>
</dbReference>
<dbReference type="RefSeq" id="WP_012346718.1">
    <property type="nucleotide sequence ID" value="NC_010524.1"/>
</dbReference>
<dbReference type="SMR" id="B1XY56"/>
<dbReference type="STRING" id="395495.Lcho_1690"/>
<dbReference type="KEGG" id="lch:Lcho_1690"/>
<dbReference type="eggNOG" id="COG0008">
    <property type="taxonomic scope" value="Bacteria"/>
</dbReference>
<dbReference type="HOGENOM" id="CLU_015768_6_1_4"/>
<dbReference type="OrthoDB" id="9807503at2"/>
<dbReference type="Proteomes" id="UP000001693">
    <property type="component" value="Chromosome"/>
</dbReference>
<dbReference type="GO" id="GO:0005829">
    <property type="term" value="C:cytosol"/>
    <property type="evidence" value="ECO:0007669"/>
    <property type="project" value="TreeGrafter"/>
</dbReference>
<dbReference type="GO" id="GO:0005524">
    <property type="term" value="F:ATP binding"/>
    <property type="evidence" value="ECO:0007669"/>
    <property type="project" value="UniProtKB-UniRule"/>
</dbReference>
<dbReference type="GO" id="GO:0004818">
    <property type="term" value="F:glutamate-tRNA ligase activity"/>
    <property type="evidence" value="ECO:0007669"/>
    <property type="project" value="UniProtKB-UniRule"/>
</dbReference>
<dbReference type="GO" id="GO:0000049">
    <property type="term" value="F:tRNA binding"/>
    <property type="evidence" value="ECO:0007669"/>
    <property type="project" value="InterPro"/>
</dbReference>
<dbReference type="GO" id="GO:0008270">
    <property type="term" value="F:zinc ion binding"/>
    <property type="evidence" value="ECO:0007669"/>
    <property type="project" value="InterPro"/>
</dbReference>
<dbReference type="GO" id="GO:0006424">
    <property type="term" value="P:glutamyl-tRNA aminoacylation"/>
    <property type="evidence" value="ECO:0007669"/>
    <property type="project" value="UniProtKB-UniRule"/>
</dbReference>
<dbReference type="CDD" id="cd00808">
    <property type="entry name" value="GluRS_core"/>
    <property type="match status" value="1"/>
</dbReference>
<dbReference type="FunFam" id="3.40.50.620:FF:000007">
    <property type="entry name" value="Glutamate--tRNA ligase"/>
    <property type="match status" value="1"/>
</dbReference>
<dbReference type="Gene3D" id="1.10.10.350">
    <property type="match status" value="1"/>
</dbReference>
<dbReference type="Gene3D" id="3.40.50.620">
    <property type="entry name" value="HUPs"/>
    <property type="match status" value="1"/>
</dbReference>
<dbReference type="HAMAP" id="MF_00022">
    <property type="entry name" value="Glu_tRNA_synth_type1"/>
    <property type="match status" value="1"/>
</dbReference>
<dbReference type="InterPro" id="IPR045462">
    <property type="entry name" value="aa-tRNA-synth_I_cd-bd"/>
</dbReference>
<dbReference type="InterPro" id="IPR020751">
    <property type="entry name" value="aa-tRNA-synth_I_codon-bd_sub2"/>
</dbReference>
<dbReference type="InterPro" id="IPR001412">
    <property type="entry name" value="aa-tRNA-synth_I_CS"/>
</dbReference>
<dbReference type="InterPro" id="IPR008925">
    <property type="entry name" value="aa_tRNA-synth_I_cd-bd_sf"/>
</dbReference>
<dbReference type="InterPro" id="IPR004527">
    <property type="entry name" value="Glu-tRNA-ligase_bac/mito"/>
</dbReference>
<dbReference type="InterPro" id="IPR000924">
    <property type="entry name" value="Glu/Gln-tRNA-synth"/>
</dbReference>
<dbReference type="InterPro" id="IPR020058">
    <property type="entry name" value="Glu/Gln-tRNA-synth_Ib_cat-dom"/>
</dbReference>
<dbReference type="InterPro" id="IPR049940">
    <property type="entry name" value="GluQ/Sye"/>
</dbReference>
<dbReference type="InterPro" id="IPR033910">
    <property type="entry name" value="GluRS_core"/>
</dbReference>
<dbReference type="InterPro" id="IPR014729">
    <property type="entry name" value="Rossmann-like_a/b/a_fold"/>
</dbReference>
<dbReference type="NCBIfam" id="TIGR00464">
    <property type="entry name" value="gltX_bact"/>
    <property type="match status" value="1"/>
</dbReference>
<dbReference type="PANTHER" id="PTHR43311">
    <property type="entry name" value="GLUTAMATE--TRNA LIGASE"/>
    <property type="match status" value="1"/>
</dbReference>
<dbReference type="PANTHER" id="PTHR43311:SF2">
    <property type="entry name" value="GLUTAMATE--TRNA LIGASE, MITOCHONDRIAL-RELATED"/>
    <property type="match status" value="1"/>
</dbReference>
<dbReference type="Pfam" id="PF19269">
    <property type="entry name" value="Anticodon_2"/>
    <property type="match status" value="1"/>
</dbReference>
<dbReference type="Pfam" id="PF00749">
    <property type="entry name" value="tRNA-synt_1c"/>
    <property type="match status" value="1"/>
</dbReference>
<dbReference type="PRINTS" id="PR00987">
    <property type="entry name" value="TRNASYNTHGLU"/>
</dbReference>
<dbReference type="SUPFAM" id="SSF48163">
    <property type="entry name" value="An anticodon-binding domain of class I aminoacyl-tRNA synthetases"/>
    <property type="match status" value="1"/>
</dbReference>
<dbReference type="SUPFAM" id="SSF52374">
    <property type="entry name" value="Nucleotidylyl transferase"/>
    <property type="match status" value="1"/>
</dbReference>
<dbReference type="PROSITE" id="PS00178">
    <property type="entry name" value="AA_TRNA_LIGASE_I"/>
    <property type="match status" value="1"/>
</dbReference>
<organism>
    <name type="scientific">Leptothrix cholodnii (strain ATCC 51168 / LMG 8142 / SP-6)</name>
    <name type="common">Leptothrix discophora (strain SP-6)</name>
    <dbReference type="NCBI Taxonomy" id="395495"/>
    <lineage>
        <taxon>Bacteria</taxon>
        <taxon>Pseudomonadati</taxon>
        <taxon>Pseudomonadota</taxon>
        <taxon>Betaproteobacteria</taxon>
        <taxon>Burkholderiales</taxon>
        <taxon>Sphaerotilaceae</taxon>
        <taxon>Leptothrix</taxon>
    </lineage>
</organism>
<proteinExistence type="inferred from homology"/>
<sequence length="468" mass="52622">MTQVSTPVRTRFAPSPTGFIHLGNIRSALYPWAFARATGGTFVLRIEDTDVERSSQAAVDVIVEGMKWLGLDHDEGPFFQMQRMARYKEVLAQLVARGQVYPCYMSMTELDALRERQMANKEKPRYDGTWRPEPGKVLPAVPEGVQPVLRFRTPQGGSVIWDDKVKGRIEISNDELDDLVIARPDGTPTYNFCVVVDDIDMAITHVIRGDDHVNNTPRQIHIFRALGQEPPVYAHLPTVLNEQGEKMSKRHGAKPVTQYREEGFLADAVVNYLARLGWSHGDDEIFSRAQLIEWFNLDHLGKSAGQYDEAKLRWVNSQHMKLCDNGVLAGLVAEQFARRELLVPVDERLARMCALFKDRCSTTVELADWLSMYFVPIQASEQDLAAHVTDAVRPALQTLRDKLAALASWDKASISLCIKETIATHALKMPLLAVPVRVLVTGRAQTPSVDAVLELFQQEIVLKRLQSV</sequence>